<name>NUOI_CROS8</name>
<accession>A7MPB5</accession>
<feature type="chain" id="PRO_1000143643" description="NADH-quinone oxidoreductase subunit I">
    <location>
        <begin position="1"/>
        <end position="180"/>
    </location>
</feature>
<feature type="domain" description="4Fe-4S ferredoxin-type 1" evidence="1">
    <location>
        <begin position="48"/>
        <end position="80"/>
    </location>
</feature>
<feature type="domain" description="4Fe-4S ferredoxin-type 2" evidence="1">
    <location>
        <begin position="90"/>
        <end position="119"/>
    </location>
</feature>
<feature type="binding site" evidence="1">
    <location>
        <position position="60"/>
    </location>
    <ligand>
        <name>[4Fe-4S] cluster</name>
        <dbReference type="ChEBI" id="CHEBI:49883"/>
        <label>1</label>
    </ligand>
</feature>
<feature type="binding site" evidence="1">
    <location>
        <position position="63"/>
    </location>
    <ligand>
        <name>[4Fe-4S] cluster</name>
        <dbReference type="ChEBI" id="CHEBI:49883"/>
        <label>1</label>
    </ligand>
</feature>
<feature type="binding site" evidence="1">
    <location>
        <position position="66"/>
    </location>
    <ligand>
        <name>[4Fe-4S] cluster</name>
        <dbReference type="ChEBI" id="CHEBI:49883"/>
        <label>1</label>
    </ligand>
</feature>
<feature type="binding site" evidence="1">
    <location>
        <position position="70"/>
    </location>
    <ligand>
        <name>[4Fe-4S] cluster</name>
        <dbReference type="ChEBI" id="CHEBI:49883"/>
        <label>2</label>
    </ligand>
</feature>
<feature type="binding site" evidence="1">
    <location>
        <position position="99"/>
    </location>
    <ligand>
        <name>[4Fe-4S] cluster</name>
        <dbReference type="ChEBI" id="CHEBI:49883"/>
        <label>2</label>
    </ligand>
</feature>
<feature type="binding site" evidence="1">
    <location>
        <position position="102"/>
    </location>
    <ligand>
        <name>[4Fe-4S] cluster</name>
        <dbReference type="ChEBI" id="CHEBI:49883"/>
        <label>2</label>
    </ligand>
</feature>
<feature type="binding site" evidence="1">
    <location>
        <position position="105"/>
    </location>
    <ligand>
        <name>[4Fe-4S] cluster</name>
        <dbReference type="ChEBI" id="CHEBI:49883"/>
        <label>2</label>
    </ligand>
</feature>
<feature type="binding site" evidence="1">
    <location>
        <position position="109"/>
    </location>
    <ligand>
        <name>[4Fe-4S] cluster</name>
        <dbReference type="ChEBI" id="CHEBI:49883"/>
        <label>1</label>
    </ligand>
</feature>
<evidence type="ECO:0000255" key="1">
    <source>
        <dbReference type="HAMAP-Rule" id="MF_01351"/>
    </source>
</evidence>
<protein>
    <recommendedName>
        <fullName evidence="1">NADH-quinone oxidoreductase subunit I</fullName>
        <ecNumber evidence="1">7.1.1.-</ecNumber>
    </recommendedName>
    <alternativeName>
        <fullName evidence="1">NADH dehydrogenase I subunit I</fullName>
    </alternativeName>
    <alternativeName>
        <fullName evidence="1">NDH-1 subunit I</fullName>
    </alternativeName>
</protein>
<sequence>MTLKDIVVGFGTQLRSIWMIGLHAFSKRETRMYPEEPVYLPPRYRGRIVLTRDPDGQERCVACNLCAVACPVGCISLQKAETVDGRWYPEFFRINFSRCIFCGMCEEACPTTAIQLTPDFELGEFKRQDLVYEKEDLLISGPGKYPEYNFYRMAGMAIDGKDKGDAENEAKPIDVKGLLP</sequence>
<proteinExistence type="inferred from homology"/>
<gene>
    <name evidence="1" type="primary">nuoI</name>
    <name type="ordered locus">ESA_00939</name>
</gene>
<keyword id="KW-0004">4Fe-4S</keyword>
<keyword id="KW-0997">Cell inner membrane</keyword>
<keyword id="KW-1003">Cell membrane</keyword>
<keyword id="KW-0408">Iron</keyword>
<keyword id="KW-0411">Iron-sulfur</keyword>
<keyword id="KW-0472">Membrane</keyword>
<keyword id="KW-0479">Metal-binding</keyword>
<keyword id="KW-0520">NAD</keyword>
<keyword id="KW-0874">Quinone</keyword>
<keyword id="KW-1185">Reference proteome</keyword>
<keyword id="KW-0677">Repeat</keyword>
<keyword id="KW-1278">Translocase</keyword>
<keyword id="KW-0830">Ubiquinone</keyword>
<organism>
    <name type="scientific">Cronobacter sakazakii (strain ATCC BAA-894)</name>
    <name type="common">Enterobacter sakazakii</name>
    <dbReference type="NCBI Taxonomy" id="290339"/>
    <lineage>
        <taxon>Bacteria</taxon>
        <taxon>Pseudomonadati</taxon>
        <taxon>Pseudomonadota</taxon>
        <taxon>Gammaproteobacteria</taxon>
        <taxon>Enterobacterales</taxon>
        <taxon>Enterobacteriaceae</taxon>
        <taxon>Cronobacter</taxon>
    </lineage>
</organism>
<reference key="1">
    <citation type="journal article" date="2010" name="PLoS ONE">
        <title>Genome sequence of Cronobacter sakazakii BAA-894 and comparative genomic hybridization analysis with other Cronobacter species.</title>
        <authorList>
            <person name="Kucerova E."/>
            <person name="Clifton S.W."/>
            <person name="Xia X.Q."/>
            <person name="Long F."/>
            <person name="Porwollik S."/>
            <person name="Fulton L."/>
            <person name="Fronick C."/>
            <person name="Minx P."/>
            <person name="Kyung K."/>
            <person name="Warren W."/>
            <person name="Fulton R."/>
            <person name="Feng D."/>
            <person name="Wollam A."/>
            <person name="Shah N."/>
            <person name="Bhonagiri V."/>
            <person name="Nash W.E."/>
            <person name="Hallsworth-Pepin K."/>
            <person name="Wilson R.K."/>
            <person name="McClelland M."/>
            <person name="Forsythe S.J."/>
        </authorList>
    </citation>
    <scope>NUCLEOTIDE SEQUENCE [LARGE SCALE GENOMIC DNA]</scope>
    <source>
        <strain>ATCC BAA-894</strain>
    </source>
</reference>
<comment type="function">
    <text evidence="1">NDH-1 shuttles electrons from NADH, via FMN and iron-sulfur (Fe-S) centers, to quinones in the respiratory chain. The immediate electron acceptor for the enzyme in this species is believed to be ubiquinone. Couples the redox reaction to proton translocation (for every two electrons transferred, four hydrogen ions are translocated across the cytoplasmic membrane), and thus conserves the redox energy in a proton gradient.</text>
</comment>
<comment type="catalytic activity">
    <reaction evidence="1">
        <text>a quinone + NADH + 5 H(+)(in) = a quinol + NAD(+) + 4 H(+)(out)</text>
        <dbReference type="Rhea" id="RHEA:57888"/>
        <dbReference type="ChEBI" id="CHEBI:15378"/>
        <dbReference type="ChEBI" id="CHEBI:24646"/>
        <dbReference type="ChEBI" id="CHEBI:57540"/>
        <dbReference type="ChEBI" id="CHEBI:57945"/>
        <dbReference type="ChEBI" id="CHEBI:132124"/>
    </reaction>
</comment>
<comment type="cofactor">
    <cofactor evidence="1">
        <name>[4Fe-4S] cluster</name>
        <dbReference type="ChEBI" id="CHEBI:49883"/>
    </cofactor>
    <text evidence="1">Binds 2 [4Fe-4S] clusters per subunit.</text>
</comment>
<comment type="subunit">
    <text evidence="1">NDH-1 is composed of 13 different subunits. Subunits NuoA, H, J, K, L, M, N constitute the membrane sector of the complex.</text>
</comment>
<comment type="subcellular location">
    <subcellularLocation>
        <location evidence="1">Cell inner membrane</location>
        <topology evidence="1">Peripheral membrane protein</topology>
    </subcellularLocation>
</comment>
<comment type="similarity">
    <text evidence="1">Belongs to the complex I 23 kDa subunit family.</text>
</comment>
<dbReference type="EC" id="7.1.1.-" evidence="1"/>
<dbReference type="EMBL" id="CP000783">
    <property type="protein sequence ID" value="ABU76209.1"/>
    <property type="molecule type" value="Genomic_DNA"/>
</dbReference>
<dbReference type="RefSeq" id="WP_004388259.1">
    <property type="nucleotide sequence ID" value="NC_009778.1"/>
</dbReference>
<dbReference type="SMR" id="A7MPB5"/>
<dbReference type="GeneID" id="56729872"/>
<dbReference type="KEGG" id="esa:ESA_00939"/>
<dbReference type="HOGENOM" id="CLU_067218_4_3_6"/>
<dbReference type="Proteomes" id="UP000000260">
    <property type="component" value="Chromosome"/>
</dbReference>
<dbReference type="GO" id="GO:0005886">
    <property type="term" value="C:plasma membrane"/>
    <property type="evidence" value="ECO:0007669"/>
    <property type="project" value="UniProtKB-SubCell"/>
</dbReference>
<dbReference type="GO" id="GO:0051539">
    <property type="term" value="F:4 iron, 4 sulfur cluster binding"/>
    <property type="evidence" value="ECO:0007669"/>
    <property type="project" value="UniProtKB-KW"/>
</dbReference>
<dbReference type="GO" id="GO:0005506">
    <property type="term" value="F:iron ion binding"/>
    <property type="evidence" value="ECO:0007669"/>
    <property type="project" value="UniProtKB-UniRule"/>
</dbReference>
<dbReference type="GO" id="GO:0050136">
    <property type="term" value="F:NADH:ubiquinone reductase (non-electrogenic) activity"/>
    <property type="evidence" value="ECO:0007669"/>
    <property type="project" value="UniProtKB-UniRule"/>
</dbReference>
<dbReference type="GO" id="GO:0048038">
    <property type="term" value="F:quinone binding"/>
    <property type="evidence" value="ECO:0007669"/>
    <property type="project" value="UniProtKB-KW"/>
</dbReference>
<dbReference type="GO" id="GO:0009060">
    <property type="term" value="P:aerobic respiration"/>
    <property type="evidence" value="ECO:0007669"/>
    <property type="project" value="TreeGrafter"/>
</dbReference>
<dbReference type="FunFam" id="3.30.70.3270:FF:000002">
    <property type="entry name" value="NADH-quinone oxidoreductase subunit I"/>
    <property type="match status" value="1"/>
</dbReference>
<dbReference type="Gene3D" id="3.30.70.3270">
    <property type="match status" value="1"/>
</dbReference>
<dbReference type="HAMAP" id="MF_01351">
    <property type="entry name" value="NDH1_NuoI"/>
    <property type="match status" value="1"/>
</dbReference>
<dbReference type="InterPro" id="IPR017896">
    <property type="entry name" value="4Fe4S_Fe-S-bd"/>
</dbReference>
<dbReference type="InterPro" id="IPR017900">
    <property type="entry name" value="4Fe4S_Fe_S_CS"/>
</dbReference>
<dbReference type="InterPro" id="IPR010226">
    <property type="entry name" value="NADH_quinone_OxRdtase_chainI"/>
</dbReference>
<dbReference type="NCBIfam" id="TIGR01971">
    <property type="entry name" value="NuoI"/>
    <property type="match status" value="1"/>
</dbReference>
<dbReference type="NCBIfam" id="NF004536">
    <property type="entry name" value="PRK05888.1-1"/>
    <property type="match status" value="1"/>
</dbReference>
<dbReference type="PANTHER" id="PTHR10849:SF20">
    <property type="entry name" value="NADH DEHYDROGENASE [UBIQUINONE] IRON-SULFUR PROTEIN 8, MITOCHONDRIAL"/>
    <property type="match status" value="1"/>
</dbReference>
<dbReference type="PANTHER" id="PTHR10849">
    <property type="entry name" value="NADH DEHYDROGENASE UBIQUINONE IRON-SULFUR PROTEIN 8, MITOCHONDRIAL"/>
    <property type="match status" value="1"/>
</dbReference>
<dbReference type="Pfam" id="PF12838">
    <property type="entry name" value="Fer4_7"/>
    <property type="match status" value="1"/>
</dbReference>
<dbReference type="SUPFAM" id="SSF54862">
    <property type="entry name" value="4Fe-4S ferredoxins"/>
    <property type="match status" value="1"/>
</dbReference>
<dbReference type="PROSITE" id="PS00198">
    <property type="entry name" value="4FE4S_FER_1"/>
    <property type="match status" value="2"/>
</dbReference>
<dbReference type="PROSITE" id="PS51379">
    <property type="entry name" value="4FE4S_FER_2"/>
    <property type="match status" value="2"/>
</dbReference>